<reference key="1">
    <citation type="submission" date="2006-04" db="EMBL/GenBank/DDBJ databases">
        <authorList>
            <consortium name="NIH - Mammalian Gene Collection (MGC) project"/>
        </authorList>
    </citation>
    <scope>NUCLEOTIDE SEQUENCE [LARGE SCALE MRNA]</scope>
    <source>
        <strain>Hereford</strain>
        <tissue>Ascending colon</tissue>
    </source>
</reference>
<evidence type="ECO:0000250" key="1">
    <source>
        <dbReference type="UniProtKB" id="O60493"/>
    </source>
</evidence>
<evidence type="ECO:0000250" key="2">
    <source>
        <dbReference type="UniProtKB" id="O70492"/>
    </source>
</evidence>
<evidence type="ECO:0000250" key="3">
    <source>
        <dbReference type="UniProtKB" id="Q96L94"/>
    </source>
</evidence>
<evidence type="ECO:0000255" key="4">
    <source>
        <dbReference type="PROSITE-ProRule" id="PRU00147"/>
    </source>
</evidence>
<evidence type="ECO:0000305" key="5"/>
<name>SNX3_BOVIN</name>
<gene>
    <name type="primary">SNX3</name>
</gene>
<accession>Q1RMH8</accession>
<feature type="initiator methionine" description="Removed" evidence="1">
    <location>
        <position position="1"/>
    </location>
</feature>
<feature type="chain" id="PRO_0000245489" description="Sorting nexin-3">
    <location>
        <begin position="2"/>
        <end position="162"/>
    </location>
</feature>
<feature type="domain" description="PX" evidence="4">
    <location>
        <begin position="27"/>
        <end position="151"/>
    </location>
</feature>
<feature type="region of interest" description="Binds predominantly to PtdIns(P5) and weaker to PtdIns(P3) abd PtdIns(P4); involved in neurite outgrowth regulation" evidence="2">
    <location>
        <begin position="147"/>
        <end position="162"/>
    </location>
</feature>
<feature type="binding site" evidence="3">
    <location>
        <position position="70"/>
    </location>
    <ligand>
        <name>a 1,2-diacyl-sn-glycero-3-phospho-(1D-myo-inositol-3-phosphate)</name>
        <dbReference type="ChEBI" id="CHEBI:58088"/>
    </ligand>
</feature>
<feature type="binding site" evidence="3">
    <location>
        <position position="72"/>
    </location>
    <ligand>
        <name>a 1,2-diacyl-sn-glycero-3-phospho-(1D-myo-inositol-3-phosphate)</name>
        <dbReference type="ChEBI" id="CHEBI:58088"/>
    </ligand>
</feature>
<feature type="binding site" evidence="3">
    <location>
        <position position="95"/>
    </location>
    <ligand>
        <name>a 1,2-diacyl-sn-glycero-3-phospho-(1D-myo-inositol-3-phosphate)</name>
        <dbReference type="ChEBI" id="CHEBI:58088"/>
    </ligand>
</feature>
<feature type="binding site" evidence="3">
    <location>
        <position position="118"/>
    </location>
    <ligand>
        <name>a 1,2-diacyl-sn-glycero-3-phospho-(1D-myo-inositol-3-phosphate)</name>
        <dbReference type="ChEBI" id="CHEBI:58088"/>
    </ligand>
</feature>
<feature type="modified residue" description="N-acetylalanine" evidence="1">
    <location>
        <position position="2"/>
    </location>
</feature>
<feature type="modified residue" description="Omega-N-methylarginine" evidence="1">
    <location>
        <position position="43"/>
    </location>
</feature>
<feature type="modified residue" description="Phosphoserine" evidence="1">
    <location>
        <position position="72"/>
    </location>
</feature>
<feature type="cross-link" description="Glycyl lysine isopeptide (Lys-Gly) (interchain with G-Cter in SUMO2)" evidence="1">
    <location>
        <position position="95"/>
    </location>
</feature>
<proteinExistence type="evidence at transcript level"/>
<dbReference type="EMBL" id="BC114888">
    <property type="protein sequence ID" value="AAI14889.1"/>
    <property type="molecule type" value="mRNA"/>
</dbReference>
<dbReference type="RefSeq" id="NP_001073246.1">
    <property type="nucleotide sequence ID" value="NM_001079778.1"/>
</dbReference>
<dbReference type="SMR" id="Q1RMH8"/>
<dbReference type="FunCoup" id="Q1RMH8">
    <property type="interactions" value="3054"/>
</dbReference>
<dbReference type="STRING" id="9913.ENSBTAP00000025026"/>
<dbReference type="PaxDb" id="9913-ENSBTAP00000025026"/>
<dbReference type="PeptideAtlas" id="Q1RMH8"/>
<dbReference type="Ensembl" id="ENSBTAT00000025026.4">
    <property type="protein sequence ID" value="ENSBTAP00000025026.3"/>
    <property type="gene ID" value="ENSBTAG00000018801.5"/>
</dbReference>
<dbReference type="GeneID" id="528265"/>
<dbReference type="KEGG" id="bta:528265"/>
<dbReference type="CTD" id="8724"/>
<dbReference type="VEuPathDB" id="HostDB:ENSBTAG00000018801"/>
<dbReference type="VGNC" id="VGNC:35107">
    <property type="gene designation" value="SNX3"/>
</dbReference>
<dbReference type="eggNOG" id="KOG2527">
    <property type="taxonomic scope" value="Eukaryota"/>
</dbReference>
<dbReference type="GeneTree" id="ENSGT00940000153609"/>
<dbReference type="HOGENOM" id="CLU_057172_2_2_1"/>
<dbReference type="InParanoid" id="Q1RMH8"/>
<dbReference type="OMA" id="VGRQRYT"/>
<dbReference type="OrthoDB" id="5227681at2759"/>
<dbReference type="TreeFam" id="TF314980"/>
<dbReference type="Reactome" id="R-BTA-3238698">
    <property type="pathway name" value="WNT ligand biogenesis and trafficking"/>
</dbReference>
<dbReference type="Proteomes" id="UP000009136">
    <property type="component" value="Chromosome 9"/>
</dbReference>
<dbReference type="Bgee" id="ENSBTAG00000018801">
    <property type="expression patterns" value="Expressed in occipital lobe and 104 other cell types or tissues"/>
</dbReference>
<dbReference type="GO" id="GO:0030136">
    <property type="term" value="C:clathrin-coated vesicle"/>
    <property type="evidence" value="ECO:0000250"/>
    <property type="project" value="UniProtKB"/>
</dbReference>
<dbReference type="GO" id="GO:0005769">
    <property type="term" value="C:early endosome"/>
    <property type="evidence" value="ECO:0000250"/>
    <property type="project" value="UniProtKB"/>
</dbReference>
<dbReference type="GO" id="GO:0031901">
    <property type="term" value="C:early endosome membrane"/>
    <property type="evidence" value="ECO:0000318"/>
    <property type="project" value="GO_Central"/>
</dbReference>
<dbReference type="GO" id="GO:0032009">
    <property type="term" value="C:early phagosome"/>
    <property type="evidence" value="ECO:0000250"/>
    <property type="project" value="UniProtKB"/>
</dbReference>
<dbReference type="GO" id="GO:0010008">
    <property type="term" value="C:endosome membrane"/>
    <property type="evidence" value="ECO:0000250"/>
    <property type="project" value="UniProtKB"/>
</dbReference>
<dbReference type="GO" id="GO:0030904">
    <property type="term" value="C:retromer complex"/>
    <property type="evidence" value="ECO:0000318"/>
    <property type="project" value="GO_Central"/>
</dbReference>
<dbReference type="GO" id="GO:0080025">
    <property type="term" value="F:phosphatidylinositol-3,5-bisphosphate binding"/>
    <property type="evidence" value="ECO:0000250"/>
    <property type="project" value="UniProtKB"/>
</dbReference>
<dbReference type="GO" id="GO:0032266">
    <property type="term" value="F:phosphatidylinositol-3-phosphate binding"/>
    <property type="evidence" value="ECO:0000250"/>
    <property type="project" value="UniProtKB"/>
</dbReference>
<dbReference type="GO" id="GO:0070273">
    <property type="term" value="F:phosphatidylinositol-4-phosphate binding"/>
    <property type="evidence" value="ECO:0000250"/>
    <property type="project" value="UniProtKB"/>
</dbReference>
<dbReference type="GO" id="GO:0010314">
    <property type="term" value="F:phosphatidylinositol-5-phosphate binding"/>
    <property type="evidence" value="ECO:0000250"/>
    <property type="project" value="UniProtKB"/>
</dbReference>
<dbReference type="GO" id="GO:1905394">
    <property type="term" value="F:retromer complex binding"/>
    <property type="evidence" value="ECO:0000250"/>
    <property type="project" value="UniProtKB"/>
</dbReference>
<dbReference type="GO" id="GO:0032456">
    <property type="term" value="P:endocytic recycling"/>
    <property type="evidence" value="ECO:0000318"/>
    <property type="project" value="GO_Central"/>
</dbReference>
<dbReference type="GO" id="GO:0034499">
    <property type="term" value="P:late endosome to Golgi transport"/>
    <property type="evidence" value="ECO:0000318"/>
    <property type="project" value="GO_Central"/>
</dbReference>
<dbReference type="GO" id="GO:0050765">
    <property type="term" value="P:negative regulation of phagocytosis"/>
    <property type="evidence" value="ECO:0000250"/>
    <property type="project" value="UniProtKB"/>
</dbReference>
<dbReference type="GO" id="GO:0010976">
    <property type="term" value="P:positive regulation of neuron projection development"/>
    <property type="evidence" value="ECO:0000250"/>
    <property type="project" value="UniProtKB"/>
</dbReference>
<dbReference type="GO" id="GO:0022615">
    <property type="term" value="P:protein to membrane docking"/>
    <property type="evidence" value="ECO:0000250"/>
    <property type="project" value="UniProtKB"/>
</dbReference>
<dbReference type="GO" id="GO:0015031">
    <property type="term" value="P:protein transport"/>
    <property type="evidence" value="ECO:0007669"/>
    <property type="project" value="UniProtKB-KW"/>
</dbReference>
<dbReference type="GO" id="GO:0030111">
    <property type="term" value="P:regulation of Wnt signaling pathway"/>
    <property type="evidence" value="ECO:0000250"/>
    <property type="project" value="UniProtKB"/>
</dbReference>
<dbReference type="CDD" id="cd07293">
    <property type="entry name" value="PX_SNX3"/>
    <property type="match status" value="1"/>
</dbReference>
<dbReference type="FunFam" id="3.30.1520.10:FF:000002">
    <property type="entry name" value="Sorting nexin 12"/>
    <property type="match status" value="1"/>
</dbReference>
<dbReference type="Gene3D" id="3.30.1520.10">
    <property type="entry name" value="Phox-like domain"/>
    <property type="match status" value="1"/>
</dbReference>
<dbReference type="InterPro" id="IPR001683">
    <property type="entry name" value="PX_dom"/>
</dbReference>
<dbReference type="InterPro" id="IPR036871">
    <property type="entry name" value="PX_dom_sf"/>
</dbReference>
<dbReference type="InterPro" id="IPR042137">
    <property type="entry name" value="PX_SNX3_Vert"/>
</dbReference>
<dbReference type="InterPro" id="IPR051074">
    <property type="entry name" value="Sorting_Nexin"/>
</dbReference>
<dbReference type="PANTHER" id="PTHR45963">
    <property type="entry name" value="RE52028P"/>
    <property type="match status" value="1"/>
</dbReference>
<dbReference type="PANTHER" id="PTHR45963:SF1">
    <property type="entry name" value="SORTING NEXIN-3"/>
    <property type="match status" value="1"/>
</dbReference>
<dbReference type="Pfam" id="PF00787">
    <property type="entry name" value="PX"/>
    <property type="match status" value="1"/>
</dbReference>
<dbReference type="SMART" id="SM00312">
    <property type="entry name" value="PX"/>
    <property type="match status" value="1"/>
</dbReference>
<dbReference type="SUPFAM" id="SSF64268">
    <property type="entry name" value="PX domain"/>
    <property type="match status" value="1"/>
</dbReference>
<dbReference type="PROSITE" id="PS50195">
    <property type="entry name" value="PX"/>
    <property type="match status" value="1"/>
</dbReference>
<organism>
    <name type="scientific">Bos taurus</name>
    <name type="common">Bovine</name>
    <dbReference type="NCBI Taxonomy" id="9913"/>
    <lineage>
        <taxon>Eukaryota</taxon>
        <taxon>Metazoa</taxon>
        <taxon>Chordata</taxon>
        <taxon>Craniata</taxon>
        <taxon>Vertebrata</taxon>
        <taxon>Euteleostomi</taxon>
        <taxon>Mammalia</taxon>
        <taxon>Eutheria</taxon>
        <taxon>Laurasiatheria</taxon>
        <taxon>Artiodactyla</taxon>
        <taxon>Ruminantia</taxon>
        <taxon>Pecora</taxon>
        <taxon>Bovidae</taxon>
        <taxon>Bovinae</taxon>
        <taxon>Bos</taxon>
    </lineage>
</organism>
<keyword id="KW-0007">Acetylation</keyword>
<keyword id="KW-0968">Cytoplasmic vesicle</keyword>
<keyword id="KW-0967">Endosome</keyword>
<keyword id="KW-1017">Isopeptide bond</keyword>
<keyword id="KW-0446">Lipid-binding</keyword>
<keyword id="KW-0488">Methylation</keyword>
<keyword id="KW-0597">Phosphoprotein</keyword>
<keyword id="KW-0653">Protein transport</keyword>
<keyword id="KW-1185">Reference proteome</keyword>
<keyword id="KW-0813">Transport</keyword>
<keyword id="KW-0832">Ubl conjugation</keyword>
<protein>
    <recommendedName>
        <fullName>Sorting nexin-3</fullName>
    </recommendedName>
</protein>
<comment type="function">
    <text evidence="1 2">Phosphoinositide-binding protein required for multivesicular body formation. Specifically binds phosphatidylinositol 3-phosphate (PtdIns(P3)). Can also bind phosphatidylinositol 4-phosphate (PtdIns(P4)), phosphatidylinositol 5-phosphate (PtdIns(P5)) and phosphatidylinositol 3,5-biphosphate (PtdIns(3,5)P2). Plays a role in protein transport between cellular compartments. Together with RAB7A facilitates endosome membrane association of the retromer cargo-selective subcomplex (CSC). May act in part as component of the SNX3-retromer complex which mediates the retrograde endosome-to-TGN transport of WLS distinct from the SNX-BAR retromer pathway. Promotes stability and cell surface expression of epithelial sodium channel (ENAC) subunits SCNN1A and SCNN1G. Not involved in EGFR degradation. Involved in the regulation of phagocytosis in dendritic cells possibly by regulating EEA1 recruitment to the nascent phagosomes. Involved in iron homeostasis through regulation of endocytic recycling of the transferrin receptor Tfrc presuambly by delivering the transferrin:transferrin receptor complex to recycling endosomes; the function may involve the CSC retromer subcomplex. Involved in regulation of neurite outgrowth in primary neurons.</text>
</comment>
<comment type="subunit">
    <text evidence="1 2">Interacts with VPS26A, VPS29 and VPS35; the interaction with VPS35 is direct. The association with the retromer CSC subcomplex subunits is proposed to represent a functional distinct retromer variant described as SNX3-retromer complex. Interacts with USP10 and SCNN1A. Interacts with TRFC. Interacts with SNX8; 2 molecules of SNX8 seems to associate with one molecule of SNX3. Interacts with PTPRU (By similarity). Interacts with MON2 and DOP1B.</text>
</comment>
<comment type="subcellular location">
    <subcellularLocation>
        <location evidence="1 2">Early endosome</location>
    </subcellularLocation>
    <subcellularLocation>
        <location evidence="1">Cytoplasmic vesicle</location>
        <location evidence="1">Phagosome</location>
    </subcellularLocation>
    <text evidence="1 2">Colocalizes to clathrin-coated endosomal vesicles morphologically distinct from retromer-decorated non-branched endosomal tubule structures. Colocalizes with EEA1 on nascent phagosomes in dendritic cells but competes with EEA1 for binding to phagosomal membrane (By similarity).</text>
</comment>
<comment type="domain">
    <text evidence="1">The PX domain mediates specific binding to phosphatidylinositol 3-phosphate (PtdIns(P3)).</text>
</comment>
<comment type="PTM">
    <text evidence="2">Ubiquitinated, leading to its proteasomal degradation. Deubiquitinated by USP10 (By similarity).</text>
</comment>
<comment type="similarity">
    <text evidence="5">Belongs to the sorting nexin family.</text>
</comment>
<sequence length="162" mass="18762">MAETVADTRRLITKPQNLNDAYGPPSNFLEIDVSNPQTVGVGRGRFTTYEIRVKTNLPIFKLKESTVRRRYSDFEWLRSELERESKVVVPPLPGKAFLRQLPFRGDDGIFDDNFIEERKQGLEQFINKVAGHPLAQNERCLHMFLQDEIIDKSYTPSKIRHA</sequence>